<keyword id="KW-0067">ATP-binding</keyword>
<keyword id="KW-0119">Carbohydrate metabolism</keyword>
<keyword id="KW-0963">Cytoplasm</keyword>
<keyword id="KW-0299">Galactose metabolism</keyword>
<keyword id="KW-0418">Kinase</keyword>
<keyword id="KW-0460">Magnesium</keyword>
<keyword id="KW-0479">Metal-binding</keyword>
<keyword id="KW-0547">Nucleotide-binding</keyword>
<keyword id="KW-0808">Transferase</keyword>
<name>GAL1_SALPC</name>
<protein>
    <recommendedName>
        <fullName evidence="1">Galactokinase</fullName>
        <ecNumber evidence="1">2.7.1.6</ecNumber>
    </recommendedName>
    <alternativeName>
        <fullName evidence="1">Galactose kinase</fullName>
    </alternativeName>
</protein>
<accession>C0PWW2</accession>
<gene>
    <name evidence="1" type="primary">galK</name>
    <name type="ordered locus">SPC_0770</name>
</gene>
<organism>
    <name type="scientific">Salmonella paratyphi C (strain RKS4594)</name>
    <dbReference type="NCBI Taxonomy" id="476213"/>
    <lineage>
        <taxon>Bacteria</taxon>
        <taxon>Pseudomonadati</taxon>
        <taxon>Pseudomonadota</taxon>
        <taxon>Gammaproteobacteria</taxon>
        <taxon>Enterobacterales</taxon>
        <taxon>Enterobacteriaceae</taxon>
        <taxon>Salmonella</taxon>
    </lineage>
</organism>
<reference key="1">
    <citation type="journal article" date="2009" name="PLoS ONE">
        <title>Salmonella paratyphi C: genetic divergence from Salmonella choleraesuis and pathogenic convergence with Salmonella typhi.</title>
        <authorList>
            <person name="Liu W.-Q."/>
            <person name="Feng Y."/>
            <person name="Wang Y."/>
            <person name="Zou Q.-H."/>
            <person name="Chen F."/>
            <person name="Guo J.-T."/>
            <person name="Peng Y.-H."/>
            <person name="Jin Y."/>
            <person name="Li Y.-G."/>
            <person name="Hu S.-N."/>
            <person name="Johnston R.N."/>
            <person name="Liu G.-R."/>
            <person name="Liu S.-L."/>
        </authorList>
    </citation>
    <scope>NUCLEOTIDE SEQUENCE [LARGE SCALE GENOMIC DNA]</scope>
    <source>
        <strain>RKS4594</strain>
    </source>
</reference>
<comment type="function">
    <text evidence="1">Catalyzes the transfer of the gamma-phosphate of ATP to D-galactose to form alpha-D-galactose-1-phosphate (Gal-1-P).</text>
</comment>
<comment type="catalytic activity">
    <reaction evidence="1">
        <text>alpha-D-galactose + ATP = alpha-D-galactose 1-phosphate + ADP + H(+)</text>
        <dbReference type="Rhea" id="RHEA:13553"/>
        <dbReference type="ChEBI" id="CHEBI:15378"/>
        <dbReference type="ChEBI" id="CHEBI:28061"/>
        <dbReference type="ChEBI" id="CHEBI:30616"/>
        <dbReference type="ChEBI" id="CHEBI:58336"/>
        <dbReference type="ChEBI" id="CHEBI:456216"/>
        <dbReference type="EC" id="2.7.1.6"/>
    </reaction>
</comment>
<comment type="pathway">
    <text evidence="1">Carbohydrate metabolism; galactose metabolism.</text>
</comment>
<comment type="subcellular location">
    <subcellularLocation>
        <location evidence="1">Cytoplasm</location>
    </subcellularLocation>
</comment>
<comment type="similarity">
    <text evidence="1">Belongs to the GHMP kinase family. GalK subfamily.</text>
</comment>
<evidence type="ECO:0000255" key="1">
    <source>
        <dbReference type="HAMAP-Rule" id="MF_00246"/>
    </source>
</evidence>
<feature type="chain" id="PRO_1000125382" description="Galactokinase">
    <location>
        <begin position="1"/>
        <end position="382"/>
    </location>
</feature>
<feature type="active site" description="Proton acceptor" evidence="1">
    <location>
        <position position="174"/>
    </location>
</feature>
<feature type="binding site" evidence="1">
    <location>
        <begin position="34"/>
        <end position="37"/>
    </location>
    <ligand>
        <name>substrate</name>
    </ligand>
</feature>
<feature type="binding site" evidence="1">
    <location>
        <begin position="124"/>
        <end position="130"/>
    </location>
    <ligand>
        <name>ATP</name>
        <dbReference type="ChEBI" id="CHEBI:30616"/>
    </ligand>
</feature>
<feature type="binding site" evidence="1">
    <location>
        <position position="130"/>
    </location>
    <ligand>
        <name>Mg(2+)</name>
        <dbReference type="ChEBI" id="CHEBI:18420"/>
    </ligand>
</feature>
<feature type="binding site" evidence="1">
    <location>
        <position position="162"/>
    </location>
    <ligand>
        <name>Mg(2+)</name>
        <dbReference type="ChEBI" id="CHEBI:18420"/>
    </ligand>
</feature>
<feature type="binding site" evidence="1">
    <location>
        <position position="223"/>
    </location>
    <ligand>
        <name>substrate</name>
    </ligand>
</feature>
<feature type="site" description="Transition state stabilizer" evidence="1">
    <location>
        <position position="28"/>
    </location>
</feature>
<dbReference type="EC" id="2.7.1.6" evidence="1"/>
<dbReference type="EMBL" id="CP000857">
    <property type="protein sequence ID" value="ACN44944.1"/>
    <property type="molecule type" value="Genomic_DNA"/>
</dbReference>
<dbReference type="RefSeq" id="WP_001049375.1">
    <property type="nucleotide sequence ID" value="NC_012125.1"/>
</dbReference>
<dbReference type="SMR" id="C0PWW2"/>
<dbReference type="KEGG" id="sei:SPC_0770"/>
<dbReference type="HOGENOM" id="CLU_017814_2_1_6"/>
<dbReference type="UniPathway" id="UPA00214"/>
<dbReference type="Proteomes" id="UP000001599">
    <property type="component" value="Chromosome"/>
</dbReference>
<dbReference type="GO" id="GO:0005829">
    <property type="term" value="C:cytosol"/>
    <property type="evidence" value="ECO:0007669"/>
    <property type="project" value="TreeGrafter"/>
</dbReference>
<dbReference type="GO" id="GO:0005524">
    <property type="term" value="F:ATP binding"/>
    <property type="evidence" value="ECO:0007669"/>
    <property type="project" value="UniProtKB-UniRule"/>
</dbReference>
<dbReference type="GO" id="GO:0004335">
    <property type="term" value="F:galactokinase activity"/>
    <property type="evidence" value="ECO:0007669"/>
    <property type="project" value="UniProtKB-UniRule"/>
</dbReference>
<dbReference type="GO" id="GO:0000287">
    <property type="term" value="F:magnesium ion binding"/>
    <property type="evidence" value="ECO:0007669"/>
    <property type="project" value="UniProtKB-UniRule"/>
</dbReference>
<dbReference type="GO" id="GO:0006012">
    <property type="term" value="P:galactose metabolic process"/>
    <property type="evidence" value="ECO:0007669"/>
    <property type="project" value="UniProtKB-UniRule"/>
</dbReference>
<dbReference type="FunFam" id="3.30.230.10:FF:000017">
    <property type="entry name" value="Galactokinase"/>
    <property type="match status" value="1"/>
</dbReference>
<dbReference type="FunFam" id="3.30.70.890:FF:000001">
    <property type="entry name" value="Galactokinase"/>
    <property type="match status" value="1"/>
</dbReference>
<dbReference type="Gene3D" id="3.30.230.10">
    <property type="match status" value="1"/>
</dbReference>
<dbReference type="Gene3D" id="3.30.70.890">
    <property type="entry name" value="GHMP kinase, C-terminal domain"/>
    <property type="match status" value="1"/>
</dbReference>
<dbReference type="HAMAP" id="MF_00246">
    <property type="entry name" value="Galactokinase"/>
    <property type="match status" value="1"/>
</dbReference>
<dbReference type="InterPro" id="IPR000705">
    <property type="entry name" value="Galactokinase"/>
</dbReference>
<dbReference type="InterPro" id="IPR022963">
    <property type="entry name" value="Galactokinase_bac"/>
</dbReference>
<dbReference type="InterPro" id="IPR019741">
    <property type="entry name" value="Galactokinase_CS"/>
</dbReference>
<dbReference type="InterPro" id="IPR019539">
    <property type="entry name" value="GalKase_N"/>
</dbReference>
<dbReference type="InterPro" id="IPR013750">
    <property type="entry name" value="GHMP_kinase_C_dom"/>
</dbReference>
<dbReference type="InterPro" id="IPR036554">
    <property type="entry name" value="GHMP_kinase_C_sf"/>
</dbReference>
<dbReference type="InterPro" id="IPR006204">
    <property type="entry name" value="GHMP_kinase_N_dom"/>
</dbReference>
<dbReference type="InterPro" id="IPR006203">
    <property type="entry name" value="GHMP_knse_ATP-bd_CS"/>
</dbReference>
<dbReference type="InterPro" id="IPR006206">
    <property type="entry name" value="Mevalonate/galactokinase"/>
</dbReference>
<dbReference type="InterPro" id="IPR020568">
    <property type="entry name" value="Ribosomal_Su5_D2-typ_SF"/>
</dbReference>
<dbReference type="InterPro" id="IPR014721">
    <property type="entry name" value="Ribsml_uS5_D2-typ_fold_subgr"/>
</dbReference>
<dbReference type="NCBIfam" id="TIGR00131">
    <property type="entry name" value="gal_kin"/>
    <property type="match status" value="1"/>
</dbReference>
<dbReference type="NCBIfam" id="NF003472">
    <property type="entry name" value="PRK05101.1"/>
    <property type="match status" value="1"/>
</dbReference>
<dbReference type="PANTHER" id="PTHR10457:SF7">
    <property type="entry name" value="GALACTOKINASE-RELATED"/>
    <property type="match status" value="1"/>
</dbReference>
<dbReference type="PANTHER" id="PTHR10457">
    <property type="entry name" value="MEVALONATE KINASE/GALACTOKINASE"/>
    <property type="match status" value="1"/>
</dbReference>
<dbReference type="Pfam" id="PF10509">
    <property type="entry name" value="GalKase_gal_bdg"/>
    <property type="match status" value="1"/>
</dbReference>
<dbReference type="Pfam" id="PF08544">
    <property type="entry name" value="GHMP_kinases_C"/>
    <property type="match status" value="1"/>
</dbReference>
<dbReference type="Pfam" id="PF00288">
    <property type="entry name" value="GHMP_kinases_N"/>
    <property type="match status" value="1"/>
</dbReference>
<dbReference type="PIRSF" id="PIRSF000530">
    <property type="entry name" value="Galactokinase"/>
    <property type="match status" value="1"/>
</dbReference>
<dbReference type="PRINTS" id="PR00473">
    <property type="entry name" value="GALCTOKINASE"/>
</dbReference>
<dbReference type="PRINTS" id="PR00959">
    <property type="entry name" value="MEVGALKINASE"/>
</dbReference>
<dbReference type="SUPFAM" id="SSF55060">
    <property type="entry name" value="GHMP Kinase, C-terminal domain"/>
    <property type="match status" value="1"/>
</dbReference>
<dbReference type="SUPFAM" id="SSF54211">
    <property type="entry name" value="Ribosomal protein S5 domain 2-like"/>
    <property type="match status" value="1"/>
</dbReference>
<dbReference type="PROSITE" id="PS00106">
    <property type="entry name" value="GALACTOKINASE"/>
    <property type="match status" value="1"/>
</dbReference>
<dbReference type="PROSITE" id="PS00627">
    <property type="entry name" value="GHMP_KINASES_ATP"/>
    <property type="match status" value="1"/>
</dbReference>
<proteinExistence type="inferred from homology"/>
<sequence>MNLKEKTRALFAEIFSYPATHTIQAPGRVNLIGEHTDYNDGFVLPCAIDYQTVISCAPRNDRTVRVIAADYDNQVEEFSLDAPIVTHDSQQWSNYVRGVVKHLQQRNNAFGGVDMVISGNVPQGAGLSSSASLEVAVGTVFQQLYHLPLDGAQIALNGQEAENQFVGCNCGIMDQLISALGKKDHALLIDCRTLGAKAVSMPKGVAVVIINSNFKRTLVGSEYNTRREQCETGARFFQQPALRDVSLEAFNAVASELDPVVAKRVRHVLSENARTVEAASALEKGDLQRMGQLMAESHASMRDDFEITVPQIDTLVDIVKATIGDQGGVRMTGGGFGGCVVALIPEDLVPAVRQAVAQQYEAKTGIKETFYVCKPSQGAGQC</sequence>